<comment type="function">
    <text evidence="1 2 3">Functions as an aminopeptidase, with a clear preference for leucine as the N-terminal amino acid. However, can also cleave moderately long polypeptide substrates of various compositions in a fairly unspecific manner. Has neither carboxypeptidase nor endoproteolytic activities, and it is devoid of N-terminal deblocking activity. Is involved in protein degradation, performing degradation of oligopeptides produced by the proteasome into single amino acids.</text>
</comment>
<comment type="cofactor">
    <cofactor evidence="1 2 3">
        <name>Zn(2+)</name>
        <dbReference type="ChEBI" id="CHEBI:29105"/>
    </cofactor>
    <cofactor evidence="1 2 3">
        <name>Co(2+)</name>
        <dbReference type="ChEBI" id="CHEBI:48828"/>
    </cofactor>
    <text evidence="1 2 3">Binds 2 Zn(2+) ions per subunit. Can also use Co(2+).</text>
</comment>
<comment type="activity regulation">
    <text evidence="3">Inhibited by EDTA and bestatin in vitro. Is insensitive to papain, antipain, chymostatin, leupeptin, pepstatin and aprotinin.</text>
</comment>
<comment type="biophysicochemical properties">
    <phDependence>
        <text evidence="3">Optimum pH is 7.5 with Leu-pNA as substrate. Strong activity is still detectable at pH 6 and 9.</text>
    </phDependence>
    <temperatureDependence>
        <text evidence="3">Optimum temperature is 100 degrees Celsius over a broad pH array. At temperatures lower than 70 degrees Celsius, less than 10% of the maximum activity is detected. Highly thermostable. Shows half-lives of 24.8 minutes and 10.03 hours when incubated at 100 and 80 degrees Celsius, respectively.</text>
    </temperatureDependence>
</comment>
<comment type="subunit">
    <text evidence="1 2 3">Homododecamer. The assembly of six dimers results in a tetrahedral-shaped structure; all 12 active sites are located on the inside of the tetrahedron. Substrate access is granted by four pores with a maximal diameter of 18 Angstroms, allowing only small peptides and unfolded proteins access to the active site. Beside the four entry ports, TET contains 12 small product release openings, which are large enough to allow passage of only single amino acid residues.</text>
</comment>
<comment type="miscellaneous">
    <text>The hydrolytic mechanism is nonprocessive. Therefore, the enzyme does not process one substrate molecule completely before starting with another one. Instead, the reaction products are generated by multiple rounds of substrate digestion.</text>
</comment>
<comment type="similarity">
    <text evidence="4">Belongs to the peptidase M42 family.</text>
</comment>
<feature type="chain" id="PRO_0000391012" description="Tetrahedral aminopeptidase">
    <location>
        <begin position="1"/>
        <end position="353"/>
    </location>
</feature>
<feature type="active site" description="Proton acceptor" evidence="1 2">
    <location>
        <position position="212"/>
    </location>
</feature>
<feature type="binding site">
    <location>
        <position position="68"/>
    </location>
    <ligand>
        <name>Zn(2+)</name>
        <dbReference type="ChEBI" id="CHEBI:29105"/>
        <label>1</label>
    </ligand>
</feature>
<feature type="binding site">
    <location>
        <position position="182"/>
    </location>
    <ligand>
        <name>Zn(2+)</name>
        <dbReference type="ChEBI" id="CHEBI:29105"/>
        <label>1</label>
    </ligand>
</feature>
<feature type="binding site">
    <location>
        <position position="182"/>
    </location>
    <ligand>
        <name>Zn(2+)</name>
        <dbReference type="ChEBI" id="CHEBI:29105"/>
        <label>2</label>
    </ligand>
</feature>
<feature type="binding site">
    <location>
        <position position="213"/>
    </location>
    <ligand>
        <name>Zn(2+)</name>
        <dbReference type="ChEBI" id="CHEBI:29105"/>
        <label>2</label>
    </ligand>
</feature>
<feature type="binding site">
    <location>
        <position position="235"/>
    </location>
    <ligand>
        <name>Zn(2+)</name>
        <dbReference type="ChEBI" id="CHEBI:29105"/>
        <label>1</label>
    </ligand>
</feature>
<feature type="binding site">
    <location>
        <position position="323"/>
    </location>
    <ligand>
        <name>Zn(2+)</name>
        <dbReference type="ChEBI" id="CHEBI:29105"/>
        <label>2</label>
    </ligand>
</feature>
<feature type="helix" evidence="5">
    <location>
        <begin position="9"/>
        <end position="17"/>
    </location>
</feature>
<feature type="helix" evidence="5">
    <location>
        <begin position="25"/>
        <end position="27"/>
    </location>
</feature>
<feature type="helix" evidence="5">
    <location>
        <begin position="29"/>
        <end position="37"/>
    </location>
</feature>
<feature type="helix" evidence="5">
    <location>
        <begin position="38"/>
        <end position="40"/>
    </location>
</feature>
<feature type="strand" evidence="5">
    <location>
        <begin position="41"/>
        <end position="46"/>
    </location>
</feature>
<feature type="strand" evidence="5">
    <location>
        <begin position="52"/>
        <end position="56"/>
    </location>
</feature>
<feature type="strand" evidence="5">
    <location>
        <begin position="62"/>
        <end position="68"/>
    </location>
</feature>
<feature type="strand" evidence="5">
    <location>
        <begin position="73"/>
        <end position="79"/>
    </location>
</feature>
<feature type="strand" evidence="5">
    <location>
        <begin position="85"/>
        <end position="92"/>
    </location>
</feature>
<feature type="helix" evidence="5">
    <location>
        <begin position="95"/>
        <end position="97"/>
    </location>
</feature>
<feature type="turn" evidence="5">
    <location>
        <begin position="98"/>
        <end position="100"/>
    </location>
</feature>
<feature type="strand" evidence="5">
    <location>
        <begin position="102"/>
        <end position="108"/>
    </location>
</feature>
<feature type="strand" evidence="5">
    <location>
        <begin position="111"/>
        <end position="118"/>
    </location>
</feature>
<feature type="helix" evidence="5">
    <location>
        <begin position="136"/>
        <end position="138"/>
    </location>
</feature>
<feature type="strand" evidence="5">
    <location>
        <begin position="140"/>
        <end position="142"/>
    </location>
</feature>
<feature type="helix" evidence="5">
    <location>
        <begin position="148"/>
        <end position="153"/>
    </location>
</feature>
<feature type="strand" evidence="5">
    <location>
        <begin position="161"/>
        <end position="164"/>
    </location>
</feature>
<feature type="strand" evidence="5">
    <location>
        <begin position="169"/>
        <end position="171"/>
    </location>
</feature>
<feature type="turn" evidence="5">
    <location>
        <begin position="172"/>
        <end position="174"/>
    </location>
</feature>
<feature type="strand" evidence="5">
    <location>
        <begin position="175"/>
        <end position="178"/>
    </location>
</feature>
<feature type="helix" evidence="5">
    <location>
        <begin position="181"/>
        <end position="196"/>
    </location>
</feature>
<feature type="strand" evidence="5">
    <location>
        <begin position="201"/>
        <end position="210"/>
    </location>
</feature>
<feature type="turn" evidence="5">
    <location>
        <begin position="213"/>
        <end position="215"/>
    </location>
</feature>
<feature type="helix" evidence="5">
    <location>
        <begin position="217"/>
        <end position="226"/>
    </location>
</feature>
<feature type="strand" evidence="5">
    <location>
        <begin position="229"/>
        <end position="238"/>
    </location>
</feature>
<feature type="helix" evidence="5">
    <location>
        <begin position="247"/>
        <end position="249"/>
    </location>
</feature>
<feature type="strand" evidence="5">
    <location>
        <begin position="258"/>
        <end position="264"/>
    </location>
</feature>
<feature type="helix" evidence="5">
    <location>
        <begin position="271"/>
        <end position="283"/>
    </location>
</feature>
<feature type="strand" evidence="5">
    <location>
        <begin position="288"/>
        <end position="292"/>
    </location>
</feature>
<feature type="helix" evidence="5">
    <location>
        <begin position="300"/>
        <end position="303"/>
    </location>
</feature>
<feature type="strand" evidence="5">
    <location>
        <begin position="312"/>
        <end position="321"/>
    </location>
</feature>
<feature type="strand" evidence="5">
    <location>
        <begin position="323"/>
        <end position="325"/>
    </location>
</feature>
<feature type="strand" evidence="5">
    <location>
        <begin position="327"/>
        <end position="330"/>
    </location>
</feature>
<feature type="helix" evidence="5">
    <location>
        <begin position="331"/>
        <end position="347"/>
    </location>
</feature>
<feature type="helix" evidence="5">
    <location>
        <begin position="348"/>
        <end position="350"/>
    </location>
</feature>
<organism>
    <name type="scientific">Pyrococcus horikoshii (strain ATCC 700860 / DSM 12428 / JCM 9974 / NBRC 100139 / OT-3)</name>
    <dbReference type="NCBI Taxonomy" id="70601"/>
    <lineage>
        <taxon>Archaea</taxon>
        <taxon>Methanobacteriati</taxon>
        <taxon>Methanobacteriota</taxon>
        <taxon>Thermococci</taxon>
        <taxon>Thermococcales</taxon>
        <taxon>Thermococcaceae</taxon>
        <taxon>Pyrococcus</taxon>
    </lineage>
</organism>
<name>TET_PYRHO</name>
<keyword id="KW-0002">3D-structure</keyword>
<keyword id="KW-0031">Aminopeptidase</keyword>
<keyword id="KW-0170">Cobalt</keyword>
<keyword id="KW-0378">Hydrolase</keyword>
<keyword id="KW-0479">Metal-binding</keyword>
<keyword id="KW-0482">Metalloprotease</keyword>
<keyword id="KW-0645">Protease</keyword>
<keyword id="KW-0862">Zinc</keyword>
<reference key="1">
    <citation type="journal article" date="1998" name="DNA Res.">
        <title>Complete sequence and gene organization of the genome of a hyper-thermophilic archaebacterium, Pyrococcus horikoshii OT3.</title>
        <authorList>
            <person name="Kawarabayasi Y."/>
            <person name="Sawada M."/>
            <person name="Horikawa H."/>
            <person name="Haikawa Y."/>
            <person name="Hino Y."/>
            <person name="Yamamoto S."/>
            <person name="Sekine M."/>
            <person name="Baba S."/>
            <person name="Kosugi H."/>
            <person name="Hosoyama A."/>
            <person name="Nagai Y."/>
            <person name="Sakai M."/>
            <person name="Ogura K."/>
            <person name="Otsuka R."/>
            <person name="Nakazawa H."/>
            <person name="Takamiya M."/>
            <person name="Ohfuku Y."/>
            <person name="Funahashi T."/>
            <person name="Tanaka T."/>
            <person name="Kudoh Y."/>
            <person name="Yamazaki J."/>
            <person name="Kushida N."/>
            <person name="Oguchi A."/>
            <person name="Aoki K."/>
            <person name="Yoshizawa T."/>
            <person name="Nakamura Y."/>
            <person name="Robb F.T."/>
            <person name="Horikoshi K."/>
            <person name="Masuchi Y."/>
            <person name="Shizuya H."/>
            <person name="Kikuchi H."/>
        </authorList>
    </citation>
    <scope>NUCLEOTIDE SEQUENCE [LARGE SCALE GENOMIC DNA]</scope>
    <source>
        <strain>ATCC 700860 / DSM 12428 / JCM 9974 / NBRC 100139 / OT-3</strain>
    </source>
</reference>
<reference key="2">
    <citation type="journal article" date="2005" name="Biochemistry">
        <title>Characterization of a TET-like aminopeptidase complex from the hyperthermophilic archaeon Pyrococcus horikoshii.</title>
        <authorList>
            <person name="Dura M.A."/>
            <person name="Receveur-Brechot V."/>
            <person name="Andrieu J.P."/>
            <person name="Ebel C."/>
            <person name="Schoehn G."/>
            <person name="Roussel A."/>
            <person name="Franzetti B."/>
        </authorList>
    </citation>
    <scope>FUNCTION AS AN AMINOPEPTIDASE</scope>
    <scope>CATALYTIC ACTIVITY</scope>
    <scope>COFACTOR</scope>
    <scope>SUBSTRATE SPECIFICITY</scope>
    <scope>ACTIVITY REGULATION</scope>
    <scope>BIOPHYSICOCHEMICAL PROPERTIES</scope>
    <scope>SUBUNIT</scope>
    <scope>REACTION MECHANISM</scope>
</reference>
<reference key="3">
    <citation type="journal article" date="2004" name="J. Biol. Chem.">
        <title>Crystal structure of a dodecameric tetrahedral-shaped aminopeptidase.</title>
        <authorList>
            <person name="Russo S."/>
            <person name="Baumann U."/>
        </authorList>
    </citation>
    <scope>X-RAY CRYSTALLOGRAPHY (1.96 ANGSTROMS) IN COMPLEX WITH ZINC IONS</scope>
    <scope>FUNCTION AS AN AMINOPEPTIDASE</scope>
    <scope>CATALYTIC ACTIVITY</scope>
    <scope>COFACTOR</scope>
    <scope>SUBUNIT</scope>
    <scope>ACTIVE SITE</scope>
    <scope>CATALYTIC MECHANISM</scope>
</reference>
<reference key="4">
    <citation type="journal article" date="2005" name="J. Mol. Biol.">
        <title>Crystal structure of TET protease reveals complementary protein degradation pathways in prokaryotes.</title>
        <authorList>
            <person name="Borissenko L."/>
            <person name="Groll M."/>
        </authorList>
    </citation>
    <scope>X-RAY CRYSTALLOGRAPHY (1.6 ANGSTROMS) IN COMPLEXES WITH ZINC IONS AND THE INHIBITOR AMASTATIN</scope>
    <scope>FUNCTION IN PROTEIN DEGRADATION</scope>
    <scope>COFACTOR</scope>
    <scope>SUBUNIT</scope>
    <scope>ACTIVE SITE</scope>
    <scope>CATALYTIC MECHANISM</scope>
</reference>
<accession>O59196</accession>
<proteinExistence type="evidence at protein level"/>
<sequence length="353" mass="39014">MEVRNMVDYELLKKVVEAPGVSGYEFLGIRDVVIEEIKDYVDEVKVDKLGNVIAHKKGEGPKVMIAAHMDQIGLMVTHIEKNGFLRVAPIGGVDPKTLIAQRFKVWIDKGKFIYGVGASVPPHIQKPEDRKKAPDWDQIFIDIGAESKEEAEDMGVKIGTVITWDGRLERLGKHRFVSIAFDDRIAVYTILEVAKQLKDAKADVYFVATVQEEVGLRGARTSAFGIEPDYGFAIDVTIAADIPGTPEHKQVTHLGKGTAIKIMDRSVICHPTIVRWLEELAKKHEIPYQLEILLGGGTDAGAIHLTKAGVPTGALSVPARYIHSNTEVVDERDVDATVELMTKALENIHELKI</sequence>
<protein>
    <recommendedName>
        <fullName>Tetrahedral aminopeptidase</fullName>
        <shortName>TET</shortName>
        <shortName>TET aminopeptidase</shortName>
        <ecNumber>3.4.11.-</ecNumber>
    </recommendedName>
    <alternativeName>
        <fullName>Leucyl aminopeptidase</fullName>
    </alternativeName>
    <alternativeName>
        <fullName>PhTET2</fullName>
    </alternativeName>
</protein>
<dbReference type="EC" id="3.4.11.-"/>
<dbReference type="EMBL" id="BA000001">
    <property type="protein sequence ID" value="BAA30637.1"/>
    <property type="molecule type" value="Genomic_DNA"/>
</dbReference>
<dbReference type="PIR" id="E71029">
    <property type="entry name" value="E71029"/>
</dbReference>
<dbReference type="PDB" id="1XFO">
    <property type="method" value="X-ray"/>
    <property type="resolution" value="1.96 A"/>
    <property type="chains" value="A/B/C/D=1-353"/>
</dbReference>
<dbReference type="PDB" id="1Y0R">
    <property type="method" value="X-ray"/>
    <property type="resolution" value="1.75 A"/>
    <property type="chains" value="A=1-353"/>
</dbReference>
<dbReference type="PDB" id="1Y0Y">
    <property type="method" value="X-ray"/>
    <property type="resolution" value="1.60 A"/>
    <property type="chains" value="A=1-353"/>
</dbReference>
<dbReference type="PDB" id="6F3K">
    <property type="method" value="Other"/>
    <property type="resolution" value="4.10 A"/>
    <property type="chains" value="A=1-353"/>
</dbReference>
<dbReference type="PDB" id="6R8N">
    <property type="method" value="Other"/>
    <property type="resolution" value="4.10 A"/>
    <property type="chains" value="A/B/C/D/E/F/G/H/I/J/K/L=1-353"/>
</dbReference>
<dbReference type="PDBsum" id="1XFO"/>
<dbReference type="PDBsum" id="1Y0R"/>
<dbReference type="PDBsum" id="1Y0Y"/>
<dbReference type="PDBsum" id="6F3K"/>
<dbReference type="PDBsum" id="6R8N"/>
<dbReference type="BMRB" id="O59196"/>
<dbReference type="EMDB" id="EMD-4179"/>
<dbReference type="SMR" id="O59196"/>
<dbReference type="STRING" id="70601.gene:9378512"/>
<dbReference type="MEROPS" id="M42.004"/>
<dbReference type="EnsemblBacteria" id="BAA30637">
    <property type="protein sequence ID" value="BAA30637"/>
    <property type="gene ID" value="BAA30637"/>
</dbReference>
<dbReference type="KEGG" id="pho:PH1527"/>
<dbReference type="eggNOG" id="arCOG01518">
    <property type="taxonomic scope" value="Archaea"/>
</dbReference>
<dbReference type="BRENDA" id="3.4.11.1">
    <property type="organism ID" value="5244"/>
</dbReference>
<dbReference type="BRENDA" id="3.4.11.B4">
    <property type="organism ID" value="5244"/>
</dbReference>
<dbReference type="BRENDA" id="3.4.11.B9">
    <property type="organism ID" value="5244"/>
</dbReference>
<dbReference type="EvolutionaryTrace" id="O59196"/>
<dbReference type="Proteomes" id="UP000000752">
    <property type="component" value="Chromosome"/>
</dbReference>
<dbReference type="GO" id="GO:0004177">
    <property type="term" value="F:aminopeptidase activity"/>
    <property type="evidence" value="ECO:0007669"/>
    <property type="project" value="UniProtKB-KW"/>
</dbReference>
<dbReference type="GO" id="GO:0046872">
    <property type="term" value="F:metal ion binding"/>
    <property type="evidence" value="ECO:0007669"/>
    <property type="project" value="UniProtKB-KW"/>
</dbReference>
<dbReference type="GO" id="GO:0008237">
    <property type="term" value="F:metallopeptidase activity"/>
    <property type="evidence" value="ECO:0007669"/>
    <property type="project" value="UniProtKB-KW"/>
</dbReference>
<dbReference type="GO" id="GO:0006508">
    <property type="term" value="P:proteolysis"/>
    <property type="evidence" value="ECO:0007669"/>
    <property type="project" value="UniProtKB-KW"/>
</dbReference>
<dbReference type="CDD" id="cd05656">
    <property type="entry name" value="M42_Frv"/>
    <property type="match status" value="1"/>
</dbReference>
<dbReference type="Gene3D" id="2.40.30.40">
    <property type="entry name" value="Peptidase M42, domain 2"/>
    <property type="match status" value="1"/>
</dbReference>
<dbReference type="Gene3D" id="3.40.630.10">
    <property type="entry name" value="Zn peptidases"/>
    <property type="match status" value="1"/>
</dbReference>
<dbReference type="InterPro" id="IPR008007">
    <property type="entry name" value="Peptidase_M42"/>
</dbReference>
<dbReference type="InterPro" id="IPR051464">
    <property type="entry name" value="Peptidase_M42_aminopept"/>
</dbReference>
<dbReference type="InterPro" id="IPR023367">
    <property type="entry name" value="Peptidase_M42_dom2"/>
</dbReference>
<dbReference type="PANTHER" id="PTHR32481">
    <property type="entry name" value="AMINOPEPTIDASE"/>
    <property type="match status" value="1"/>
</dbReference>
<dbReference type="PANTHER" id="PTHR32481:SF0">
    <property type="entry name" value="AMINOPEPTIDASE YPDE-RELATED"/>
    <property type="match status" value="1"/>
</dbReference>
<dbReference type="Pfam" id="PF05343">
    <property type="entry name" value="Peptidase_M42"/>
    <property type="match status" value="1"/>
</dbReference>
<dbReference type="PIRSF" id="PIRSF001123">
    <property type="entry name" value="PepA_GA"/>
    <property type="match status" value="1"/>
</dbReference>
<dbReference type="SUPFAM" id="SSF101821">
    <property type="entry name" value="Aminopeptidase/glucanase lid domain"/>
    <property type="match status" value="1"/>
</dbReference>
<dbReference type="SUPFAM" id="SSF53187">
    <property type="entry name" value="Zn-dependent exopeptidases"/>
    <property type="match status" value="1"/>
</dbReference>
<evidence type="ECO:0000269" key="1">
    <source>
    </source>
</evidence>
<evidence type="ECO:0000269" key="2">
    <source>
    </source>
</evidence>
<evidence type="ECO:0000269" key="3">
    <source>
    </source>
</evidence>
<evidence type="ECO:0000305" key="4"/>
<evidence type="ECO:0007829" key="5">
    <source>
        <dbReference type="PDB" id="1Y0Y"/>
    </source>
</evidence>
<gene>
    <name type="primary">frvX</name>
    <name type="ordered locus">PH1527</name>
</gene>